<feature type="chain" id="PRO_0000222926" description="Capsid protein">
    <location>
        <begin position="1"/>
        <end position="188"/>
    </location>
</feature>
<organismHost>
    <name type="scientific">Theobroma cacao</name>
    <name type="common">Cacao</name>
    <name type="synonym">Cocoa</name>
    <dbReference type="NCBI Taxonomy" id="3641"/>
</organismHost>
<sequence length="188" mass="19788">MSSDLILAPQPLINTKASELPSQSGSPPPEIVYPFQFTIASLGVEPTADFVSIAAQAAITAYTSLYRHAILTDLQAIIHPNGYAPAFPTSVALAWVPYNSTATAAKILDVFGGQEFCVGGSINSTSPIIVPCPLTNINPIIKDSVTYTDTPKLLIYSTAPSYSTSATCTLTIRGKVRLHSPLLSSSSS</sequence>
<reference key="1">
    <citation type="journal article" date="1990" name="Nucleic Acids Res.">
        <title>Nucleotide sequence of the virion protein gene of cacao yellow mosaic tymovirus.</title>
        <authorList>
            <person name="Ding S.W."/>
            <person name="Mackenzie A."/>
            <person name="Torronen M."/>
            <person name="Gibbs A."/>
        </authorList>
    </citation>
    <scope>NUCLEOTIDE SEQUENCE [GENOMIC RNA]</scope>
</reference>
<organism>
    <name type="scientific">Cacao yellow mosaic virus</name>
    <dbReference type="NCBI Taxonomy" id="12150"/>
    <lineage>
        <taxon>Viruses</taxon>
        <taxon>Riboviria</taxon>
        <taxon>Orthornavirae</taxon>
        <taxon>Kitrinoviricota</taxon>
        <taxon>Alsuviricetes</taxon>
        <taxon>Tymovirales</taxon>
        <taxon>Tymoviridae</taxon>
        <taxon>Tymovirus</taxon>
        <taxon>Tymovirus theobromatis</taxon>
    </lineage>
</organism>
<comment type="function">
    <text evidence="1">Self-assembles to form a T=3 icosahedral capsid composed of 180 copies of the capsid protein. The capsid encapsulates the single-stranded RNA genome.</text>
</comment>
<comment type="subcellular location">
    <subcellularLocation>
        <location evidence="1">Virion</location>
    </subcellularLocation>
</comment>
<comment type="similarity">
    <text evidence="2">Belongs to the tymoviruses capsid protein family.</text>
</comment>
<accession>P19128</accession>
<protein>
    <recommendedName>
        <fullName>Capsid protein</fullName>
    </recommendedName>
    <alternativeName>
        <fullName>Coat protein</fullName>
    </alternativeName>
    <alternativeName>
        <fullName>Virion protein</fullName>
    </alternativeName>
</protein>
<keyword id="KW-0167">Capsid protein</keyword>
<keyword id="KW-1142">T=3 icosahedral capsid protein</keyword>
<keyword id="KW-0946">Virion</keyword>
<dbReference type="EMBL" id="X54354">
    <property type="protein sequence ID" value="CAA38239.1"/>
    <property type="molecule type" value="Genomic_RNA"/>
</dbReference>
<dbReference type="PIR" id="S11490">
    <property type="entry name" value="S11490"/>
</dbReference>
<dbReference type="RefSeq" id="YP_009508099.1">
    <property type="nucleotide sequence ID" value="NC_038867.1"/>
</dbReference>
<dbReference type="SMR" id="P19128"/>
<dbReference type="GeneID" id="37619378"/>
<dbReference type="OrthoDB" id="15633at10239"/>
<dbReference type="Proteomes" id="UP000243492">
    <property type="component" value="Genome"/>
</dbReference>
<dbReference type="GO" id="GO:0039617">
    <property type="term" value="C:T=3 icosahedral viral capsid"/>
    <property type="evidence" value="ECO:0007669"/>
    <property type="project" value="UniProtKB-KW"/>
</dbReference>
<dbReference type="GO" id="GO:0005198">
    <property type="term" value="F:structural molecule activity"/>
    <property type="evidence" value="ECO:0007669"/>
    <property type="project" value="InterPro"/>
</dbReference>
<dbReference type="Gene3D" id="2.60.120.20">
    <property type="match status" value="1"/>
</dbReference>
<dbReference type="InterPro" id="IPR000574">
    <property type="entry name" value="Tymo_coat"/>
</dbReference>
<dbReference type="InterPro" id="IPR029053">
    <property type="entry name" value="Viral_coat"/>
</dbReference>
<dbReference type="Pfam" id="PF00983">
    <property type="entry name" value="Tymo_coat"/>
    <property type="match status" value="1"/>
</dbReference>
<dbReference type="SUPFAM" id="SSF88633">
    <property type="entry name" value="Positive stranded ssRNA viruses"/>
    <property type="match status" value="1"/>
</dbReference>
<evidence type="ECO:0000250" key="1">
    <source>
        <dbReference type="UniProtKB" id="P20125"/>
    </source>
</evidence>
<evidence type="ECO:0000305" key="2"/>
<name>CAPSD_CAYMV</name>
<proteinExistence type="inferred from homology"/>